<name>GPMA_THEPX</name>
<dbReference type="EC" id="5.4.2.11" evidence="1"/>
<dbReference type="EMBL" id="CP000923">
    <property type="protein sequence ID" value="ABY91975.1"/>
    <property type="molecule type" value="Genomic_DNA"/>
</dbReference>
<dbReference type="RefSeq" id="WP_009052167.1">
    <property type="nucleotide sequence ID" value="NC_010320.1"/>
</dbReference>
<dbReference type="SMR" id="B0K4E2"/>
<dbReference type="KEGG" id="tex:Teth514_0667"/>
<dbReference type="HOGENOM" id="CLU_033323_1_1_9"/>
<dbReference type="UniPathway" id="UPA00109">
    <property type="reaction ID" value="UER00186"/>
</dbReference>
<dbReference type="Proteomes" id="UP000002155">
    <property type="component" value="Chromosome"/>
</dbReference>
<dbReference type="GO" id="GO:0004619">
    <property type="term" value="F:phosphoglycerate mutase activity"/>
    <property type="evidence" value="ECO:0007669"/>
    <property type="project" value="UniProtKB-EC"/>
</dbReference>
<dbReference type="GO" id="GO:0006094">
    <property type="term" value="P:gluconeogenesis"/>
    <property type="evidence" value="ECO:0007669"/>
    <property type="project" value="UniProtKB-UniRule"/>
</dbReference>
<dbReference type="GO" id="GO:0006096">
    <property type="term" value="P:glycolytic process"/>
    <property type="evidence" value="ECO:0007669"/>
    <property type="project" value="UniProtKB-UniRule"/>
</dbReference>
<dbReference type="CDD" id="cd07067">
    <property type="entry name" value="HP_PGM_like"/>
    <property type="match status" value="1"/>
</dbReference>
<dbReference type="FunFam" id="3.40.50.1240:FF:000003">
    <property type="entry name" value="2,3-bisphosphoglycerate-dependent phosphoglycerate mutase"/>
    <property type="match status" value="1"/>
</dbReference>
<dbReference type="Gene3D" id="3.40.50.1240">
    <property type="entry name" value="Phosphoglycerate mutase-like"/>
    <property type="match status" value="1"/>
</dbReference>
<dbReference type="HAMAP" id="MF_01039">
    <property type="entry name" value="PGAM_GpmA"/>
    <property type="match status" value="1"/>
</dbReference>
<dbReference type="InterPro" id="IPR013078">
    <property type="entry name" value="His_Pase_superF_clade-1"/>
</dbReference>
<dbReference type="InterPro" id="IPR029033">
    <property type="entry name" value="His_PPase_superfam"/>
</dbReference>
<dbReference type="InterPro" id="IPR001345">
    <property type="entry name" value="PG/BPGM_mutase_AS"/>
</dbReference>
<dbReference type="InterPro" id="IPR005952">
    <property type="entry name" value="Phosphogly_mut1"/>
</dbReference>
<dbReference type="NCBIfam" id="TIGR01258">
    <property type="entry name" value="pgm_1"/>
    <property type="match status" value="1"/>
</dbReference>
<dbReference type="NCBIfam" id="NF010713">
    <property type="entry name" value="PRK14115.1"/>
    <property type="match status" value="1"/>
</dbReference>
<dbReference type="PANTHER" id="PTHR11931">
    <property type="entry name" value="PHOSPHOGLYCERATE MUTASE"/>
    <property type="match status" value="1"/>
</dbReference>
<dbReference type="Pfam" id="PF00300">
    <property type="entry name" value="His_Phos_1"/>
    <property type="match status" value="1"/>
</dbReference>
<dbReference type="PIRSF" id="PIRSF000709">
    <property type="entry name" value="6PFK_2-Ptase"/>
    <property type="match status" value="1"/>
</dbReference>
<dbReference type="SMART" id="SM00855">
    <property type="entry name" value="PGAM"/>
    <property type="match status" value="1"/>
</dbReference>
<dbReference type="SUPFAM" id="SSF53254">
    <property type="entry name" value="Phosphoglycerate mutase-like"/>
    <property type="match status" value="1"/>
</dbReference>
<dbReference type="PROSITE" id="PS00175">
    <property type="entry name" value="PG_MUTASE"/>
    <property type="match status" value="1"/>
</dbReference>
<sequence>MHKVVLLRHGESLWNMENRFTGWTDVDLSPKGIEEARESGKTLKAEGYTFDCAFTSVLKRAIRTLWIVLDELDRMWIPVYKSWRLNERHYGALQGLNKAETAKKYGEEQVKIWRRSADVRPPALEKDDPRYPGFDPRYADLSEEEIPLTENLIDTINRVIPYWESTIAPTIKSGKKVLIVAHGNSLRGLVKYLDNLSKQEIMELNIPTGIPLVYELDDDLKPIRHYYLADEEKVKEKKELVENQGKIQGNS</sequence>
<accession>B0K4E2</accession>
<protein>
    <recommendedName>
        <fullName evidence="1">2,3-bisphosphoglycerate-dependent phosphoglycerate mutase</fullName>
        <shortName evidence="1">BPG-dependent PGAM</shortName>
        <shortName evidence="1">PGAM</shortName>
        <shortName evidence="1">Phosphoglyceromutase</shortName>
        <shortName evidence="1">dPGM</shortName>
        <ecNumber evidence="1">5.4.2.11</ecNumber>
    </recommendedName>
</protein>
<organism>
    <name type="scientific">Thermoanaerobacter sp. (strain X514)</name>
    <dbReference type="NCBI Taxonomy" id="399726"/>
    <lineage>
        <taxon>Bacteria</taxon>
        <taxon>Bacillati</taxon>
        <taxon>Bacillota</taxon>
        <taxon>Clostridia</taxon>
        <taxon>Thermoanaerobacterales</taxon>
        <taxon>Thermoanaerobacteraceae</taxon>
        <taxon>Thermoanaerobacter</taxon>
    </lineage>
</organism>
<gene>
    <name evidence="1" type="primary">gpmA</name>
    <name type="ordered locus">Teth514_0667</name>
</gene>
<proteinExistence type="inferred from homology"/>
<feature type="chain" id="PRO_1000135988" description="2,3-bisphosphoglycerate-dependent phosphoglycerate mutase">
    <location>
        <begin position="1"/>
        <end position="251"/>
    </location>
</feature>
<feature type="active site" description="Tele-phosphohistidine intermediate" evidence="1">
    <location>
        <position position="9"/>
    </location>
</feature>
<feature type="active site" description="Proton donor/acceptor" evidence="1">
    <location>
        <position position="87"/>
    </location>
</feature>
<feature type="binding site" evidence="1">
    <location>
        <begin position="8"/>
        <end position="15"/>
    </location>
    <ligand>
        <name>substrate</name>
    </ligand>
</feature>
<feature type="binding site" evidence="1">
    <location>
        <begin position="21"/>
        <end position="22"/>
    </location>
    <ligand>
        <name>substrate</name>
    </ligand>
</feature>
<feature type="binding site" evidence="1">
    <location>
        <position position="60"/>
    </location>
    <ligand>
        <name>substrate</name>
    </ligand>
</feature>
<feature type="binding site" evidence="1">
    <location>
        <begin position="87"/>
        <end position="90"/>
    </location>
    <ligand>
        <name>substrate</name>
    </ligand>
</feature>
<feature type="binding site" evidence="1">
    <location>
        <position position="98"/>
    </location>
    <ligand>
        <name>substrate</name>
    </ligand>
</feature>
<feature type="binding site" evidence="1">
    <location>
        <begin position="114"/>
        <end position="115"/>
    </location>
    <ligand>
        <name>substrate</name>
    </ligand>
</feature>
<feature type="binding site" evidence="1">
    <location>
        <begin position="183"/>
        <end position="184"/>
    </location>
    <ligand>
        <name>substrate</name>
    </ligand>
</feature>
<feature type="site" description="Transition state stabilizer" evidence="1">
    <location>
        <position position="182"/>
    </location>
</feature>
<evidence type="ECO:0000255" key="1">
    <source>
        <dbReference type="HAMAP-Rule" id="MF_01039"/>
    </source>
</evidence>
<reference key="1">
    <citation type="submission" date="2008-01" db="EMBL/GenBank/DDBJ databases">
        <title>Complete sequence of Thermoanaerobacter sp. X514.</title>
        <authorList>
            <consortium name="US DOE Joint Genome Institute"/>
            <person name="Copeland A."/>
            <person name="Lucas S."/>
            <person name="Lapidus A."/>
            <person name="Barry K."/>
            <person name="Glavina del Rio T."/>
            <person name="Dalin E."/>
            <person name="Tice H."/>
            <person name="Pitluck S."/>
            <person name="Bruce D."/>
            <person name="Goodwin L."/>
            <person name="Saunders E."/>
            <person name="Brettin T."/>
            <person name="Detter J.C."/>
            <person name="Han C."/>
            <person name="Schmutz J."/>
            <person name="Larimer F."/>
            <person name="Land M."/>
            <person name="Hauser L."/>
            <person name="Kyrpides N."/>
            <person name="Kim E."/>
            <person name="Hemme C."/>
            <person name="Fields M.W."/>
            <person name="He Z."/>
            <person name="Zhou J."/>
            <person name="Richardson P."/>
        </authorList>
    </citation>
    <scope>NUCLEOTIDE SEQUENCE [LARGE SCALE GENOMIC DNA]</scope>
    <source>
        <strain>X514</strain>
    </source>
</reference>
<keyword id="KW-0312">Gluconeogenesis</keyword>
<keyword id="KW-0324">Glycolysis</keyword>
<keyword id="KW-0413">Isomerase</keyword>
<comment type="function">
    <text evidence="1">Catalyzes the interconversion of 2-phosphoglycerate and 3-phosphoglycerate.</text>
</comment>
<comment type="catalytic activity">
    <reaction evidence="1">
        <text>(2R)-2-phosphoglycerate = (2R)-3-phosphoglycerate</text>
        <dbReference type="Rhea" id="RHEA:15901"/>
        <dbReference type="ChEBI" id="CHEBI:58272"/>
        <dbReference type="ChEBI" id="CHEBI:58289"/>
        <dbReference type="EC" id="5.4.2.11"/>
    </reaction>
</comment>
<comment type="pathway">
    <text evidence="1">Carbohydrate degradation; glycolysis; pyruvate from D-glyceraldehyde 3-phosphate: step 3/5.</text>
</comment>
<comment type="similarity">
    <text evidence="1">Belongs to the phosphoglycerate mutase family. BPG-dependent PGAM subfamily.</text>
</comment>